<organism>
    <name type="scientific">Bacillus cereus (strain AH187)</name>
    <dbReference type="NCBI Taxonomy" id="405534"/>
    <lineage>
        <taxon>Bacteria</taxon>
        <taxon>Bacillati</taxon>
        <taxon>Bacillota</taxon>
        <taxon>Bacilli</taxon>
        <taxon>Bacillales</taxon>
        <taxon>Bacillaceae</taxon>
        <taxon>Bacillus</taxon>
        <taxon>Bacillus cereus group</taxon>
    </lineage>
</organism>
<sequence length="423" mass="46171">MLDTLLINIGQLLTMDQEDGLLRREAMNTLPVIENGAVGIENGVITFVGTAEEAKGLQAKEVIDCGGKMVSPGLVDPHTHLVFGGSRENEIALKLQGVPYLEILEQGGGILSTVNATKQASKEELVQKAKFHLDRMLSFGVTTVEAKSGYGLDDETEWKQLEATAQLQKEHPIDLVSTFLGAHAVPKEYKGRSKEFLQWMLDLLPEMKEKQLAEFVDIFCETGVFSVEESKEFLLKAKELGFDVKIHADEIDPLGGAEAAAEIGAASADHLVGASDKGIEMLANSNTVATLLPGTTFYLNKESFARGRKMIDEGVAVALATDFNPGSCPTENIQLIMSIAMLKLKMTPEEVWNAVTVNSSYAINRGDVAGKIRVGRKADLVLWDAYNYAYVPYHYGVSHVNTVWKNGNIAYTRGEQSWSTATI</sequence>
<dbReference type="EC" id="3.5.2.7" evidence="1"/>
<dbReference type="EMBL" id="CP001177">
    <property type="protein sequence ID" value="ACJ79171.1"/>
    <property type="molecule type" value="Genomic_DNA"/>
</dbReference>
<dbReference type="SMR" id="B7HKI9"/>
<dbReference type="KEGG" id="bcr:BCAH187_A3683"/>
<dbReference type="HOGENOM" id="CLU_041647_0_1_9"/>
<dbReference type="UniPathway" id="UPA00379">
    <property type="reaction ID" value="UER00551"/>
</dbReference>
<dbReference type="Proteomes" id="UP000002214">
    <property type="component" value="Chromosome"/>
</dbReference>
<dbReference type="GO" id="GO:0005737">
    <property type="term" value="C:cytoplasm"/>
    <property type="evidence" value="ECO:0007669"/>
    <property type="project" value="UniProtKB-SubCell"/>
</dbReference>
<dbReference type="GO" id="GO:0050480">
    <property type="term" value="F:imidazolonepropionase activity"/>
    <property type="evidence" value="ECO:0007669"/>
    <property type="project" value="UniProtKB-UniRule"/>
</dbReference>
<dbReference type="GO" id="GO:0005506">
    <property type="term" value="F:iron ion binding"/>
    <property type="evidence" value="ECO:0007669"/>
    <property type="project" value="UniProtKB-UniRule"/>
</dbReference>
<dbReference type="GO" id="GO:0008270">
    <property type="term" value="F:zinc ion binding"/>
    <property type="evidence" value="ECO:0007669"/>
    <property type="project" value="UniProtKB-UniRule"/>
</dbReference>
<dbReference type="GO" id="GO:0019556">
    <property type="term" value="P:L-histidine catabolic process to glutamate and formamide"/>
    <property type="evidence" value="ECO:0007669"/>
    <property type="project" value="UniProtKB-UniPathway"/>
</dbReference>
<dbReference type="GO" id="GO:0019557">
    <property type="term" value="P:L-histidine catabolic process to glutamate and formate"/>
    <property type="evidence" value="ECO:0007669"/>
    <property type="project" value="UniProtKB-UniPathway"/>
</dbReference>
<dbReference type="CDD" id="cd01296">
    <property type="entry name" value="Imidazolone-5PH"/>
    <property type="match status" value="1"/>
</dbReference>
<dbReference type="FunFam" id="3.20.20.140:FF:000007">
    <property type="entry name" value="Imidazolonepropionase"/>
    <property type="match status" value="1"/>
</dbReference>
<dbReference type="Gene3D" id="3.20.20.140">
    <property type="entry name" value="Metal-dependent hydrolases"/>
    <property type="match status" value="1"/>
</dbReference>
<dbReference type="Gene3D" id="2.30.40.10">
    <property type="entry name" value="Urease, subunit C, domain 1"/>
    <property type="match status" value="1"/>
</dbReference>
<dbReference type="HAMAP" id="MF_00372">
    <property type="entry name" value="HutI"/>
    <property type="match status" value="1"/>
</dbReference>
<dbReference type="InterPro" id="IPR006680">
    <property type="entry name" value="Amidohydro-rel"/>
</dbReference>
<dbReference type="InterPro" id="IPR005920">
    <property type="entry name" value="HutI"/>
</dbReference>
<dbReference type="InterPro" id="IPR011059">
    <property type="entry name" value="Metal-dep_hydrolase_composite"/>
</dbReference>
<dbReference type="InterPro" id="IPR032466">
    <property type="entry name" value="Metal_Hydrolase"/>
</dbReference>
<dbReference type="NCBIfam" id="TIGR01224">
    <property type="entry name" value="hutI"/>
    <property type="match status" value="1"/>
</dbReference>
<dbReference type="PANTHER" id="PTHR42752">
    <property type="entry name" value="IMIDAZOLONEPROPIONASE"/>
    <property type="match status" value="1"/>
</dbReference>
<dbReference type="PANTHER" id="PTHR42752:SF1">
    <property type="entry name" value="IMIDAZOLONEPROPIONASE-RELATED"/>
    <property type="match status" value="1"/>
</dbReference>
<dbReference type="Pfam" id="PF01979">
    <property type="entry name" value="Amidohydro_1"/>
    <property type="match status" value="1"/>
</dbReference>
<dbReference type="SUPFAM" id="SSF51338">
    <property type="entry name" value="Composite domain of metallo-dependent hydrolases"/>
    <property type="match status" value="1"/>
</dbReference>
<dbReference type="SUPFAM" id="SSF51556">
    <property type="entry name" value="Metallo-dependent hydrolases"/>
    <property type="match status" value="1"/>
</dbReference>
<protein>
    <recommendedName>
        <fullName evidence="1">Imidazolonepropionase</fullName>
        <ecNumber evidence="1">3.5.2.7</ecNumber>
    </recommendedName>
    <alternativeName>
        <fullName evidence="1">Imidazolone-5-propionate hydrolase</fullName>
    </alternativeName>
</protein>
<accession>B7HKI9</accession>
<evidence type="ECO:0000255" key="1">
    <source>
        <dbReference type="HAMAP-Rule" id="MF_00372"/>
    </source>
</evidence>
<name>HUTI_BACC7</name>
<gene>
    <name evidence="1" type="primary">hutI</name>
    <name type="ordered locus">BCAH187_A3683</name>
</gene>
<comment type="function">
    <text evidence="1">Catalyzes the hydrolytic cleavage of the carbon-nitrogen bond in imidazolone-5-propanoate to yield N-formimidoyl-L-glutamate. It is the third step in the universal histidine degradation pathway.</text>
</comment>
<comment type="catalytic activity">
    <reaction evidence="1">
        <text>4-imidazolone-5-propanoate + H2O = N-formimidoyl-L-glutamate</text>
        <dbReference type="Rhea" id="RHEA:23660"/>
        <dbReference type="ChEBI" id="CHEBI:15377"/>
        <dbReference type="ChEBI" id="CHEBI:58928"/>
        <dbReference type="ChEBI" id="CHEBI:77893"/>
        <dbReference type="EC" id="3.5.2.7"/>
    </reaction>
</comment>
<comment type="cofactor">
    <cofactor evidence="1">
        <name>Zn(2+)</name>
        <dbReference type="ChEBI" id="CHEBI:29105"/>
    </cofactor>
    <cofactor evidence="1">
        <name>Fe(3+)</name>
        <dbReference type="ChEBI" id="CHEBI:29034"/>
    </cofactor>
    <text evidence="1">Binds 1 zinc or iron ion per subunit.</text>
</comment>
<comment type="pathway">
    <text evidence="1">Amino-acid degradation; L-histidine degradation into L-glutamate; N-formimidoyl-L-glutamate from L-histidine: step 3/3.</text>
</comment>
<comment type="subcellular location">
    <subcellularLocation>
        <location evidence="1">Cytoplasm</location>
    </subcellularLocation>
</comment>
<comment type="similarity">
    <text evidence="1">Belongs to the metallo-dependent hydrolases superfamily. HutI family.</text>
</comment>
<keyword id="KW-0963">Cytoplasm</keyword>
<keyword id="KW-0369">Histidine metabolism</keyword>
<keyword id="KW-0378">Hydrolase</keyword>
<keyword id="KW-0408">Iron</keyword>
<keyword id="KW-0479">Metal-binding</keyword>
<keyword id="KW-0862">Zinc</keyword>
<reference key="1">
    <citation type="submission" date="2008-10" db="EMBL/GenBank/DDBJ databases">
        <title>Genome sequence of Bacillus cereus AH187.</title>
        <authorList>
            <person name="Dodson R.J."/>
            <person name="Durkin A.S."/>
            <person name="Rosovitz M.J."/>
            <person name="Rasko D.A."/>
            <person name="Kolsto A.B."/>
            <person name="Okstad O.A."/>
            <person name="Ravel J."/>
            <person name="Sutton G."/>
        </authorList>
    </citation>
    <scope>NUCLEOTIDE SEQUENCE [LARGE SCALE GENOMIC DNA]</scope>
    <source>
        <strain>AH187</strain>
    </source>
</reference>
<proteinExistence type="inferred from homology"/>
<feature type="chain" id="PRO_1000121532" description="Imidazolonepropionase">
    <location>
        <begin position="1"/>
        <end position="423"/>
    </location>
</feature>
<feature type="binding site" evidence="1">
    <location>
        <position position="78"/>
    </location>
    <ligand>
        <name>Fe(3+)</name>
        <dbReference type="ChEBI" id="CHEBI:29034"/>
    </ligand>
</feature>
<feature type="binding site" evidence="1">
    <location>
        <position position="78"/>
    </location>
    <ligand>
        <name>Zn(2+)</name>
        <dbReference type="ChEBI" id="CHEBI:29105"/>
    </ligand>
</feature>
<feature type="binding site" evidence="1">
    <location>
        <position position="80"/>
    </location>
    <ligand>
        <name>Fe(3+)</name>
        <dbReference type="ChEBI" id="CHEBI:29034"/>
    </ligand>
</feature>
<feature type="binding site" evidence="1">
    <location>
        <position position="80"/>
    </location>
    <ligand>
        <name>Zn(2+)</name>
        <dbReference type="ChEBI" id="CHEBI:29105"/>
    </ligand>
</feature>
<feature type="binding site" evidence="1">
    <location>
        <position position="87"/>
    </location>
    <ligand>
        <name>4-imidazolone-5-propanoate</name>
        <dbReference type="ChEBI" id="CHEBI:77893"/>
    </ligand>
</feature>
<feature type="binding site" evidence="1">
    <location>
        <position position="150"/>
    </location>
    <ligand>
        <name>4-imidazolone-5-propanoate</name>
        <dbReference type="ChEBI" id="CHEBI:77893"/>
    </ligand>
</feature>
<feature type="binding site" evidence="1">
    <location>
        <position position="150"/>
    </location>
    <ligand>
        <name>N-formimidoyl-L-glutamate</name>
        <dbReference type="ChEBI" id="CHEBI:58928"/>
    </ligand>
</feature>
<feature type="binding site" evidence="1">
    <location>
        <position position="183"/>
    </location>
    <ligand>
        <name>4-imidazolone-5-propanoate</name>
        <dbReference type="ChEBI" id="CHEBI:77893"/>
    </ligand>
</feature>
<feature type="binding site" evidence="1">
    <location>
        <position position="247"/>
    </location>
    <ligand>
        <name>Fe(3+)</name>
        <dbReference type="ChEBI" id="CHEBI:29034"/>
    </ligand>
</feature>
<feature type="binding site" evidence="1">
    <location>
        <position position="247"/>
    </location>
    <ligand>
        <name>Zn(2+)</name>
        <dbReference type="ChEBI" id="CHEBI:29105"/>
    </ligand>
</feature>
<feature type="binding site" evidence="1">
    <location>
        <position position="250"/>
    </location>
    <ligand>
        <name>4-imidazolone-5-propanoate</name>
        <dbReference type="ChEBI" id="CHEBI:77893"/>
    </ligand>
</feature>
<feature type="binding site" evidence="1">
    <location>
        <position position="322"/>
    </location>
    <ligand>
        <name>Fe(3+)</name>
        <dbReference type="ChEBI" id="CHEBI:29034"/>
    </ligand>
</feature>
<feature type="binding site" evidence="1">
    <location>
        <position position="322"/>
    </location>
    <ligand>
        <name>Zn(2+)</name>
        <dbReference type="ChEBI" id="CHEBI:29105"/>
    </ligand>
</feature>
<feature type="binding site" evidence="1">
    <location>
        <position position="324"/>
    </location>
    <ligand>
        <name>N-formimidoyl-L-glutamate</name>
        <dbReference type="ChEBI" id="CHEBI:58928"/>
    </ligand>
</feature>
<feature type="binding site" evidence="1">
    <location>
        <position position="326"/>
    </location>
    <ligand>
        <name>N-formimidoyl-L-glutamate</name>
        <dbReference type="ChEBI" id="CHEBI:58928"/>
    </ligand>
</feature>
<feature type="binding site" evidence="1">
    <location>
        <position position="327"/>
    </location>
    <ligand>
        <name>4-imidazolone-5-propanoate</name>
        <dbReference type="ChEBI" id="CHEBI:77893"/>
    </ligand>
</feature>